<feature type="chain" id="PRO_0000104032" description="Uncharacterized protein Rv2411c">
    <location>
        <begin position="1"/>
        <end position="551"/>
    </location>
</feature>
<feature type="region of interest" description="Disordered" evidence="1">
    <location>
        <begin position="1"/>
        <end position="22"/>
    </location>
</feature>
<feature type="region of interest" description="Disordered" evidence="1">
    <location>
        <begin position="523"/>
        <end position="551"/>
    </location>
</feature>
<feature type="compositionally biased region" description="Polar residues" evidence="1">
    <location>
        <begin position="1"/>
        <end position="11"/>
    </location>
</feature>
<feature type="compositionally biased region" description="Basic and acidic residues" evidence="1">
    <location>
        <begin position="12"/>
        <end position="22"/>
    </location>
</feature>
<feature type="compositionally biased region" description="Low complexity" evidence="1">
    <location>
        <begin position="537"/>
        <end position="551"/>
    </location>
</feature>
<reference key="1">
    <citation type="journal article" date="1998" name="Nature">
        <title>Deciphering the biology of Mycobacterium tuberculosis from the complete genome sequence.</title>
        <authorList>
            <person name="Cole S.T."/>
            <person name="Brosch R."/>
            <person name="Parkhill J."/>
            <person name="Garnier T."/>
            <person name="Churcher C.M."/>
            <person name="Harris D.E."/>
            <person name="Gordon S.V."/>
            <person name="Eiglmeier K."/>
            <person name="Gas S."/>
            <person name="Barry C.E. III"/>
            <person name="Tekaia F."/>
            <person name="Badcock K."/>
            <person name="Basham D."/>
            <person name="Brown D."/>
            <person name="Chillingworth T."/>
            <person name="Connor R."/>
            <person name="Davies R.M."/>
            <person name="Devlin K."/>
            <person name="Feltwell T."/>
            <person name="Gentles S."/>
            <person name="Hamlin N."/>
            <person name="Holroyd S."/>
            <person name="Hornsby T."/>
            <person name="Jagels K."/>
            <person name="Krogh A."/>
            <person name="McLean J."/>
            <person name="Moule S."/>
            <person name="Murphy L.D."/>
            <person name="Oliver S."/>
            <person name="Osborne J."/>
            <person name="Quail M.A."/>
            <person name="Rajandream M.A."/>
            <person name="Rogers J."/>
            <person name="Rutter S."/>
            <person name="Seeger K."/>
            <person name="Skelton S."/>
            <person name="Squares S."/>
            <person name="Squares R."/>
            <person name="Sulston J.E."/>
            <person name="Taylor K."/>
            <person name="Whitehead S."/>
            <person name="Barrell B.G."/>
        </authorList>
    </citation>
    <scope>NUCLEOTIDE SEQUENCE [LARGE SCALE GENOMIC DNA]</scope>
    <source>
        <strain>ATCC 25618 / H37Rv</strain>
    </source>
</reference>
<reference key="2">
    <citation type="journal article" date="2011" name="Mol. Cell. Proteomics">
        <title>Proteogenomic analysis of Mycobacterium tuberculosis by high resolution mass spectrometry.</title>
        <authorList>
            <person name="Kelkar D.S."/>
            <person name="Kumar D."/>
            <person name="Kumar P."/>
            <person name="Balakrishnan L."/>
            <person name="Muthusamy B."/>
            <person name="Yadav A.K."/>
            <person name="Shrivastava P."/>
            <person name="Marimuthu A."/>
            <person name="Anand S."/>
            <person name="Sundaram H."/>
            <person name="Kingsbury R."/>
            <person name="Harsha H.C."/>
            <person name="Nair B."/>
            <person name="Prasad T.S."/>
            <person name="Chauhan D.S."/>
            <person name="Katoch K."/>
            <person name="Katoch V.M."/>
            <person name="Kumar P."/>
            <person name="Chaerkady R."/>
            <person name="Ramachandran S."/>
            <person name="Dash D."/>
            <person name="Pandey A."/>
        </authorList>
    </citation>
    <scope>IDENTIFICATION BY MASS SPECTROMETRY [LARGE SCALE ANALYSIS]</scope>
    <source>
        <strain>ATCC 25618 / H37Rv</strain>
    </source>
</reference>
<organism>
    <name type="scientific">Mycobacterium tuberculosis (strain ATCC 25618 / H37Rv)</name>
    <dbReference type="NCBI Taxonomy" id="83332"/>
    <lineage>
        <taxon>Bacteria</taxon>
        <taxon>Bacillati</taxon>
        <taxon>Actinomycetota</taxon>
        <taxon>Actinomycetes</taxon>
        <taxon>Mycobacteriales</taxon>
        <taxon>Mycobacteriaceae</taxon>
        <taxon>Mycobacterium</taxon>
        <taxon>Mycobacterium tuberculosis complex</taxon>
    </lineage>
</organism>
<dbReference type="EMBL" id="AL123456">
    <property type="protein sequence ID" value="CCP45202.1"/>
    <property type="molecule type" value="Genomic_DNA"/>
</dbReference>
<dbReference type="PIR" id="F70684">
    <property type="entry name" value="F70684"/>
</dbReference>
<dbReference type="RefSeq" id="NP_216927.1">
    <property type="nucleotide sequence ID" value="NC_000962.3"/>
</dbReference>
<dbReference type="RefSeq" id="WP_003412363.1">
    <property type="nucleotide sequence ID" value="NZ_NVQJ01000054.1"/>
</dbReference>
<dbReference type="SMR" id="P9WLA9"/>
<dbReference type="STRING" id="83332.Rv2411c"/>
<dbReference type="PaxDb" id="83332-Rv2411c"/>
<dbReference type="DNASU" id="885681"/>
<dbReference type="GeneID" id="885681"/>
<dbReference type="KEGG" id="mtu:Rv2411c"/>
<dbReference type="KEGG" id="mtv:RVBD_2411c"/>
<dbReference type="TubercuList" id="Rv2411c"/>
<dbReference type="eggNOG" id="COG2308">
    <property type="taxonomic scope" value="Bacteria"/>
</dbReference>
<dbReference type="InParanoid" id="P9WLA9"/>
<dbReference type="OrthoDB" id="9803842at2"/>
<dbReference type="PhylomeDB" id="P9WLA9"/>
<dbReference type="Proteomes" id="UP000001584">
    <property type="component" value="Chromosome"/>
</dbReference>
<dbReference type="Gene3D" id="3.30.1490.270">
    <property type="match status" value="1"/>
</dbReference>
<dbReference type="Gene3D" id="3.40.50.11290">
    <property type="match status" value="1"/>
</dbReference>
<dbReference type="InterPro" id="IPR051680">
    <property type="entry name" value="ATP-dep_Glu-Cys_Ligase-2"/>
</dbReference>
<dbReference type="InterPro" id="IPR007302">
    <property type="entry name" value="CP_ATPgrasp"/>
</dbReference>
<dbReference type="InterPro" id="IPR016450">
    <property type="entry name" value="UCP005522"/>
</dbReference>
<dbReference type="PANTHER" id="PTHR34595">
    <property type="entry name" value="BLR5612 PROTEIN"/>
    <property type="match status" value="1"/>
</dbReference>
<dbReference type="PANTHER" id="PTHR34595:SF7">
    <property type="entry name" value="SLL1039 PROTEIN"/>
    <property type="match status" value="1"/>
</dbReference>
<dbReference type="Pfam" id="PF04174">
    <property type="entry name" value="CP_ATPgrasp_1"/>
    <property type="match status" value="1"/>
</dbReference>
<dbReference type="PIRSF" id="PIRSF005522">
    <property type="entry name" value="UCP005522"/>
    <property type="match status" value="1"/>
</dbReference>
<dbReference type="SUPFAM" id="SSF56059">
    <property type="entry name" value="Glutathione synthetase ATP-binding domain-like"/>
    <property type="match status" value="1"/>
</dbReference>
<proteinExistence type="evidence at protein level"/>
<sequence>MRRVSLPNQLNETRRRSPTRGERIFGGYNTSDVYAMAFDEMFDAQGIVRGPYKGIYAELAPSDASELKARADALGRAFIDQGITFSLSGQERPFPLDLVPRVISAPEWTRLERGITQRVKALECYLDDIYGDQEILRDGVIPRRLVTSCEHFHRQAVGIVPPNGVRIHVAGIDLIRDHRGDFRVLEDNLRSPSGVSYVMENRRTMARVFPNLFATHRVRAVDDYASHLLRALRNSAATNEADPTVVVLTPGVYNSAYFEHSLLARQMGVELVEGRDLFCRDNQVYMRTTEGERQVDVIYRRIDDAFLDPLQFRADSVLGVAGLVNAARAGNVVLSSAIGNGVGDDKLVYTYVPTMIEYYLHEKPLLANVETLRCWLDDEREEVLDRIRELVLKPVEGSGGYGIVFGPEASQAELAAVSQKIRDDPRSWIAQPMMELSTVPTRIEGTLAPRYVDLRPFAVNDGNEVWVLPGGLTRVALVEGSRVVNSSQGGGSKDTWVLAPRASAAARELGAAQIVRSLPQPLCDPTVDASGYEPHDQQPQQQQQQQQQAFH</sequence>
<keyword id="KW-1185">Reference proteome</keyword>
<evidence type="ECO:0000256" key="1">
    <source>
        <dbReference type="SAM" id="MobiDB-lite"/>
    </source>
</evidence>
<evidence type="ECO:0000305" key="2"/>
<comment type="similarity">
    <text evidence="2">To Synechocystis PCC 6803 sll0335 and to M.tuberculosis Rv2567.</text>
</comment>
<gene>
    <name type="ordered locus">Rv2411c</name>
    <name type="ORF">MTCY253.09</name>
</gene>
<accession>P9WLA9</accession>
<accession>L0TC95</accession>
<accession>P65001</accession>
<accession>P71732</accession>
<protein>
    <recommendedName>
        <fullName>Uncharacterized protein Rv2411c</fullName>
    </recommendedName>
</protein>
<name>Y2411_MYCTU</name>